<feature type="chain" id="PRO_0000336205" description="UPF0102 protein Mflv_4140">
    <location>
        <begin position="1"/>
        <end position="123"/>
    </location>
</feature>
<sequence length="123" mass="13602">MTRTDTRAGVGALGEQLAVDYLQGLGLRVLARNWRCRYGELDVVVADDAVQAVVFVEVKTRTTDRFGGVAEAVTPVKVRRLRRLAGLWLSEQDARWESVRLDVVTVRIGQGRSPELTHIEGVG</sequence>
<organism>
    <name type="scientific">Mycolicibacterium gilvum (strain PYR-GCK)</name>
    <name type="common">Mycobacterium gilvum (strain PYR-GCK)</name>
    <dbReference type="NCBI Taxonomy" id="350054"/>
    <lineage>
        <taxon>Bacteria</taxon>
        <taxon>Bacillati</taxon>
        <taxon>Actinomycetota</taxon>
        <taxon>Actinomycetes</taxon>
        <taxon>Mycobacteriales</taxon>
        <taxon>Mycobacteriaceae</taxon>
        <taxon>Mycolicibacterium</taxon>
    </lineage>
</organism>
<proteinExistence type="inferred from homology"/>
<comment type="similarity">
    <text evidence="1">Belongs to the UPF0102 family.</text>
</comment>
<accession>A4TEA7</accession>
<evidence type="ECO:0000255" key="1">
    <source>
        <dbReference type="HAMAP-Rule" id="MF_00048"/>
    </source>
</evidence>
<protein>
    <recommendedName>
        <fullName evidence="1">UPF0102 protein Mflv_4140</fullName>
    </recommendedName>
</protein>
<name>Y4140_MYCGI</name>
<gene>
    <name type="ordered locus">Mflv_4140</name>
</gene>
<reference key="1">
    <citation type="submission" date="2007-04" db="EMBL/GenBank/DDBJ databases">
        <title>Complete sequence of chromosome of Mycobacterium gilvum PYR-GCK.</title>
        <authorList>
            <consortium name="US DOE Joint Genome Institute"/>
            <person name="Copeland A."/>
            <person name="Lucas S."/>
            <person name="Lapidus A."/>
            <person name="Barry K."/>
            <person name="Detter J.C."/>
            <person name="Glavina del Rio T."/>
            <person name="Hammon N."/>
            <person name="Israni S."/>
            <person name="Dalin E."/>
            <person name="Tice H."/>
            <person name="Pitluck S."/>
            <person name="Chain P."/>
            <person name="Malfatti S."/>
            <person name="Shin M."/>
            <person name="Vergez L."/>
            <person name="Schmutz J."/>
            <person name="Larimer F."/>
            <person name="Land M."/>
            <person name="Hauser L."/>
            <person name="Kyrpides N."/>
            <person name="Mikhailova N."/>
            <person name="Miller C."/>
            <person name="Richardson P."/>
        </authorList>
    </citation>
    <scope>NUCLEOTIDE SEQUENCE [LARGE SCALE GENOMIC DNA]</scope>
    <source>
        <strain>PYR-GCK</strain>
    </source>
</reference>
<dbReference type="EMBL" id="CP000656">
    <property type="protein sequence ID" value="ABP46610.1"/>
    <property type="molecule type" value="Genomic_DNA"/>
</dbReference>
<dbReference type="SMR" id="A4TEA7"/>
<dbReference type="STRING" id="350054.Mflv_4140"/>
<dbReference type="KEGG" id="mgi:Mflv_4140"/>
<dbReference type="eggNOG" id="COG0792">
    <property type="taxonomic scope" value="Bacteria"/>
</dbReference>
<dbReference type="HOGENOM" id="CLU_115353_2_3_11"/>
<dbReference type="OrthoDB" id="9794876at2"/>
<dbReference type="GO" id="GO:0003676">
    <property type="term" value="F:nucleic acid binding"/>
    <property type="evidence" value="ECO:0007669"/>
    <property type="project" value="InterPro"/>
</dbReference>
<dbReference type="CDD" id="cd20736">
    <property type="entry name" value="PoNe_Nuclease"/>
    <property type="match status" value="1"/>
</dbReference>
<dbReference type="Gene3D" id="3.40.1350.10">
    <property type="match status" value="1"/>
</dbReference>
<dbReference type="HAMAP" id="MF_00048">
    <property type="entry name" value="UPF0102"/>
    <property type="match status" value="1"/>
</dbReference>
<dbReference type="InterPro" id="IPR011335">
    <property type="entry name" value="Restrct_endonuc-II-like"/>
</dbReference>
<dbReference type="InterPro" id="IPR011856">
    <property type="entry name" value="tRNA_endonuc-like_dom_sf"/>
</dbReference>
<dbReference type="InterPro" id="IPR003509">
    <property type="entry name" value="UPF0102_YraN-like"/>
</dbReference>
<dbReference type="NCBIfam" id="NF009150">
    <property type="entry name" value="PRK12497.1-3"/>
    <property type="match status" value="1"/>
</dbReference>
<dbReference type="NCBIfam" id="NF009153">
    <property type="entry name" value="PRK12497.3-1"/>
    <property type="match status" value="1"/>
</dbReference>
<dbReference type="NCBIfam" id="NF009154">
    <property type="entry name" value="PRK12497.3-3"/>
    <property type="match status" value="1"/>
</dbReference>
<dbReference type="NCBIfam" id="TIGR00252">
    <property type="entry name" value="YraN family protein"/>
    <property type="match status" value="1"/>
</dbReference>
<dbReference type="PANTHER" id="PTHR34039">
    <property type="entry name" value="UPF0102 PROTEIN YRAN"/>
    <property type="match status" value="1"/>
</dbReference>
<dbReference type="PANTHER" id="PTHR34039:SF1">
    <property type="entry name" value="UPF0102 PROTEIN YRAN"/>
    <property type="match status" value="1"/>
</dbReference>
<dbReference type="Pfam" id="PF02021">
    <property type="entry name" value="UPF0102"/>
    <property type="match status" value="1"/>
</dbReference>
<dbReference type="SUPFAM" id="SSF52980">
    <property type="entry name" value="Restriction endonuclease-like"/>
    <property type="match status" value="1"/>
</dbReference>